<keyword id="KW-0143">Chaperone</keyword>
<keyword id="KW-0963">Cytoplasm</keyword>
<sequence>MNLRPLHDRVIVKRLDQETKTASGIVIPDAAAEKPDQGEVLAIGPGKRDDKGALIALDVKVGDRVLFGKYAGQTVKVDGQELLVMREEDIMAVVNAK</sequence>
<gene>
    <name evidence="1" type="primary">groES</name>
    <name evidence="1" type="synonym">groS</name>
</gene>
<dbReference type="EMBL" id="AF104908">
    <property type="protein sequence ID" value="AAC79088.1"/>
    <property type="molecule type" value="Genomic_DNA"/>
</dbReference>
<dbReference type="RefSeq" id="WP_045578492.1">
    <property type="nucleotide sequence ID" value="NZ_LPCV01000090.1"/>
</dbReference>
<dbReference type="SMR" id="Q9ZFD9"/>
<dbReference type="GeneID" id="45680057"/>
<dbReference type="GO" id="GO:0005737">
    <property type="term" value="C:cytoplasm"/>
    <property type="evidence" value="ECO:0007669"/>
    <property type="project" value="UniProtKB-SubCell"/>
</dbReference>
<dbReference type="GO" id="GO:0005524">
    <property type="term" value="F:ATP binding"/>
    <property type="evidence" value="ECO:0007669"/>
    <property type="project" value="InterPro"/>
</dbReference>
<dbReference type="GO" id="GO:0046872">
    <property type="term" value="F:metal ion binding"/>
    <property type="evidence" value="ECO:0007669"/>
    <property type="project" value="TreeGrafter"/>
</dbReference>
<dbReference type="GO" id="GO:0044183">
    <property type="term" value="F:protein folding chaperone"/>
    <property type="evidence" value="ECO:0007669"/>
    <property type="project" value="InterPro"/>
</dbReference>
<dbReference type="GO" id="GO:0051087">
    <property type="term" value="F:protein-folding chaperone binding"/>
    <property type="evidence" value="ECO:0007669"/>
    <property type="project" value="TreeGrafter"/>
</dbReference>
<dbReference type="GO" id="GO:0051082">
    <property type="term" value="F:unfolded protein binding"/>
    <property type="evidence" value="ECO:0007669"/>
    <property type="project" value="TreeGrafter"/>
</dbReference>
<dbReference type="GO" id="GO:0051085">
    <property type="term" value="P:chaperone cofactor-dependent protein refolding"/>
    <property type="evidence" value="ECO:0007669"/>
    <property type="project" value="TreeGrafter"/>
</dbReference>
<dbReference type="CDD" id="cd00320">
    <property type="entry name" value="cpn10"/>
    <property type="match status" value="1"/>
</dbReference>
<dbReference type="FunFam" id="2.30.33.40:FF:000001">
    <property type="entry name" value="10 kDa chaperonin"/>
    <property type="match status" value="1"/>
</dbReference>
<dbReference type="Gene3D" id="2.30.33.40">
    <property type="entry name" value="GroES chaperonin"/>
    <property type="match status" value="1"/>
</dbReference>
<dbReference type="HAMAP" id="MF_00580">
    <property type="entry name" value="CH10"/>
    <property type="match status" value="1"/>
</dbReference>
<dbReference type="InterPro" id="IPR020818">
    <property type="entry name" value="Chaperonin_GroES"/>
</dbReference>
<dbReference type="InterPro" id="IPR037124">
    <property type="entry name" value="Chaperonin_GroES_sf"/>
</dbReference>
<dbReference type="InterPro" id="IPR018369">
    <property type="entry name" value="Chaprnonin_Cpn10_CS"/>
</dbReference>
<dbReference type="InterPro" id="IPR011032">
    <property type="entry name" value="GroES-like_sf"/>
</dbReference>
<dbReference type="NCBIfam" id="NF001527">
    <property type="entry name" value="PRK00364.1-2"/>
    <property type="match status" value="1"/>
</dbReference>
<dbReference type="NCBIfam" id="NF001529">
    <property type="entry name" value="PRK00364.1-5"/>
    <property type="match status" value="1"/>
</dbReference>
<dbReference type="NCBIfam" id="NF001531">
    <property type="entry name" value="PRK00364.2-2"/>
    <property type="match status" value="1"/>
</dbReference>
<dbReference type="NCBIfam" id="NF001533">
    <property type="entry name" value="PRK00364.2-4"/>
    <property type="match status" value="1"/>
</dbReference>
<dbReference type="NCBIfam" id="NF001534">
    <property type="entry name" value="PRK00364.2-5"/>
    <property type="match status" value="1"/>
</dbReference>
<dbReference type="PANTHER" id="PTHR10772">
    <property type="entry name" value="10 KDA HEAT SHOCK PROTEIN"/>
    <property type="match status" value="1"/>
</dbReference>
<dbReference type="PANTHER" id="PTHR10772:SF58">
    <property type="entry name" value="CO-CHAPERONIN GROES"/>
    <property type="match status" value="1"/>
</dbReference>
<dbReference type="Pfam" id="PF00166">
    <property type="entry name" value="Cpn10"/>
    <property type="match status" value="1"/>
</dbReference>
<dbReference type="PRINTS" id="PR00297">
    <property type="entry name" value="CHAPERONIN10"/>
</dbReference>
<dbReference type="SMART" id="SM00883">
    <property type="entry name" value="Cpn10"/>
    <property type="match status" value="1"/>
</dbReference>
<dbReference type="SUPFAM" id="SSF50129">
    <property type="entry name" value="GroES-like"/>
    <property type="match status" value="1"/>
</dbReference>
<dbReference type="PROSITE" id="PS00681">
    <property type="entry name" value="CHAPERONINS_CPN10"/>
    <property type="match status" value="1"/>
</dbReference>
<proteinExistence type="inferred from homology"/>
<reference key="1">
    <citation type="submission" date="1998-11" db="EMBL/GenBank/DDBJ databases">
        <title>Nucleotide sequence comparison of the groE operon of Burkholderia spp.</title>
        <authorList>
            <person name="Zysk G."/>
            <person name="Splettstoesser W.D."/>
            <person name="Neubauer H."/>
        </authorList>
    </citation>
    <scope>NUCLEOTIDE SEQUENCE [GENOMIC DNA]</scope>
    <source>
        <strain>ATCC BAA-248 / DSM 11319 / CCUG 34169 / JCM 10562 / KCTC 2974 / LMG 10929 / TVV75</strain>
    </source>
</reference>
<feature type="chain" id="PRO_0000174723" description="Co-chaperonin GroES">
    <location>
        <begin position="1"/>
        <end position="97"/>
    </location>
</feature>
<organism>
    <name type="scientific">Burkholderia vietnamiensis</name>
    <dbReference type="NCBI Taxonomy" id="60552"/>
    <lineage>
        <taxon>Bacteria</taxon>
        <taxon>Pseudomonadati</taxon>
        <taxon>Pseudomonadota</taxon>
        <taxon>Betaproteobacteria</taxon>
        <taxon>Burkholderiales</taxon>
        <taxon>Burkholderiaceae</taxon>
        <taxon>Burkholderia</taxon>
        <taxon>Burkholderia cepacia complex</taxon>
    </lineage>
</organism>
<protein>
    <recommendedName>
        <fullName evidence="1">Co-chaperonin GroES</fullName>
    </recommendedName>
    <alternativeName>
        <fullName evidence="1">10 kDa chaperonin</fullName>
    </alternativeName>
    <alternativeName>
        <fullName evidence="1">Chaperonin-10</fullName>
        <shortName evidence="1">Cpn10</shortName>
    </alternativeName>
</protein>
<accession>Q9ZFD9</accession>
<evidence type="ECO:0000255" key="1">
    <source>
        <dbReference type="HAMAP-Rule" id="MF_00580"/>
    </source>
</evidence>
<name>CH10_BURVI</name>
<comment type="function">
    <text evidence="1">Together with the chaperonin GroEL, plays an essential role in assisting protein folding. The GroEL-GroES system forms a nano-cage that allows encapsulation of the non-native substrate proteins and provides a physical environment optimized to promote and accelerate protein folding. GroES binds to the apical surface of the GroEL ring, thereby capping the opening of the GroEL channel.</text>
</comment>
<comment type="subunit">
    <text evidence="1">Heptamer of 7 subunits arranged in a ring. Interacts with the chaperonin GroEL.</text>
</comment>
<comment type="subcellular location">
    <subcellularLocation>
        <location evidence="1">Cytoplasm</location>
    </subcellularLocation>
</comment>
<comment type="similarity">
    <text evidence="1">Belongs to the GroES chaperonin family.</text>
</comment>